<feature type="chain" id="PRO_0000347662" description="Alanine--tRNA ligase">
    <location>
        <begin position="1"/>
        <end position="879"/>
    </location>
</feature>
<feature type="binding site" evidence="1">
    <location>
        <position position="566"/>
    </location>
    <ligand>
        <name>Zn(2+)</name>
        <dbReference type="ChEBI" id="CHEBI:29105"/>
    </ligand>
</feature>
<feature type="binding site" evidence="1">
    <location>
        <position position="570"/>
    </location>
    <ligand>
        <name>Zn(2+)</name>
        <dbReference type="ChEBI" id="CHEBI:29105"/>
    </ligand>
</feature>
<feature type="binding site" evidence="1">
    <location>
        <position position="668"/>
    </location>
    <ligand>
        <name>Zn(2+)</name>
        <dbReference type="ChEBI" id="CHEBI:29105"/>
    </ligand>
</feature>
<feature type="binding site" evidence="1">
    <location>
        <position position="672"/>
    </location>
    <ligand>
        <name>Zn(2+)</name>
        <dbReference type="ChEBI" id="CHEBI:29105"/>
    </ligand>
</feature>
<gene>
    <name evidence="1" type="primary">alaS</name>
    <name type="ordered locus">lwe1517</name>
</gene>
<proteinExistence type="inferred from homology"/>
<organism>
    <name type="scientific">Listeria welshimeri serovar 6b (strain ATCC 35897 / DSM 20650 / CCUG 15529 / CIP 8149 / NCTC 11857 / SLCC 5334 / V8)</name>
    <dbReference type="NCBI Taxonomy" id="386043"/>
    <lineage>
        <taxon>Bacteria</taxon>
        <taxon>Bacillati</taxon>
        <taxon>Bacillota</taxon>
        <taxon>Bacilli</taxon>
        <taxon>Bacillales</taxon>
        <taxon>Listeriaceae</taxon>
        <taxon>Listeria</taxon>
    </lineage>
</organism>
<reference key="1">
    <citation type="journal article" date="2006" name="J. Bacteriol.">
        <title>Whole-genome sequence of Listeria welshimeri reveals common steps in genome reduction with Listeria innocua as compared to Listeria monocytogenes.</title>
        <authorList>
            <person name="Hain T."/>
            <person name="Steinweg C."/>
            <person name="Kuenne C.T."/>
            <person name="Billion A."/>
            <person name="Ghai R."/>
            <person name="Chatterjee S.S."/>
            <person name="Domann E."/>
            <person name="Kaerst U."/>
            <person name="Goesmann A."/>
            <person name="Bekel T."/>
            <person name="Bartels D."/>
            <person name="Kaiser O."/>
            <person name="Meyer F."/>
            <person name="Puehler A."/>
            <person name="Weisshaar B."/>
            <person name="Wehland J."/>
            <person name="Liang C."/>
            <person name="Dandekar T."/>
            <person name="Lampidis R."/>
            <person name="Kreft J."/>
            <person name="Goebel W."/>
            <person name="Chakraborty T."/>
        </authorList>
    </citation>
    <scope>NUCLEOTIDE SEQUENCE [LARGE SCALE GENOMIC DNA]</scope>
    <source>
        <strain>ATCC 35897 / DSM 20650 / CCUG 15529 / CIP 8149 / NCTC 11857 / SLCC 5334 / V8</strain>
    </source>
</reference>
<dbReference type="EC" id="6.1.1.7" evidence="1"/>
<dbReference type="EMBL" id="AM263198">
    <property type="protein sequence ID" value="CAK20935.1"/>
    <property type="molecule type" value="Genomic_DNA"/>
</dbReference>
<dbReference type="RefSeq" id="WP_011702307.1">
    <property type="nucleotide sequence ID" value="NC_008555.1"/>
</dbReference>
<dbReference type="SMR" id="A0AIV3"/>
<dbReference type="STRING" id="386043.lwe1517"/>
<dbReference type="GeneID" id="61189393"/>
<dbReference type="KEGG" id="lwe:lwe1517"/>
<dbReference type="eggNOG" id="COG0013">
    <property type="taxonomic scope" value="Bacteria"/>
</dbReference>
<dbReference type="HOGENOM" id="CLU_004485_1_1_9"/>
<dbReference type="OrthoDB" id="9803884at2"/>
<dbReference type="Proteomes" id="UP000000779">
    <property type="component" value="Chromosome"/>
</dbReference>
<dbReference type="GO" id="GO:0005829">
    <property type="term" value="C:cytosol"/>
    <property type="evidence" value="ECO:0007669"/>
    <property type="project" value="TreeGrafter"/>
</dbReference>
<dbReference type="GO" id="GO:0004813">
    <property type="term" value="F:alanine-tRNA ligase activity"/>
    <property type="evidence" value="ECO:0007669"/>
    <property type="project" value="UniProtKB-UniRule"/>
</dbReference>
<dbReference type="GO" id="GO:0002161">
    <property type="term" value="F:aminoacyl-tRNA deacylase activity"/>
    <property type="evidence" value="ECO:0007669"/>
    <property type="project" value="TreeGrafter"/>
</dbReference>
<dbReference type="GO" id="GO:0005524">
    <property type="term" value="F:ATP binding"/>
    <property type="evidence" value="ECO:0007669"/>
    <property type="project" value="UniProtKB-UniRule"/>
</dbReference>
<dbReference type="GO" id="GO:0140096">
    <property type="term" value="F:catalytic activity, acting on a protein"/>
    <property type="evidence" value="ECO:0007669"/>
    <property type="project" value="UniProtKB-ARBA"/>
</dbReference>
<dbReference type="GO" id="GO:0016740">
    <property type="term" value="F:transferase activity"/>
    <property type="evidence" value="ECO:0007669"/>
    <property type="project" value="UniProtKB-ARBA"/>
</dbReference>
<dbReference type="GO" id="GO:0000049">
    <property type="term" value="F:tRNA binding"/>
    <property type="evidence" value="ECO:0007669"/>
    <property type="project" value="UniProtKB-KW"/>
</dbReference>
<dbReference type="GO" id="GO:0008270">
    <property type="term" value="F:zinc ion binding"/>
    <property type="evidence" value="ECO:0007669"/>
    <property type="project" value="UniProtKB-UniRule"/>
</dbReference>
<dbReference type="GO" id="GO:0006419">
    <property type="term" value="P:alanyl-tRNA aminoacylation"/>
    <property type="evidence" value="ECO:0007669"/>
    <property type="project" value="UniProtKB-UniRule"/>
</dbReference>
<dbReference type="CDD" id="cd00673">
    <property type="entry name" value="AlaRS_core"/>
    <property type="match status" value="1"/>
</dbReference>
<dbReference type="FunFam" id="2.40.30.130:FF:000011">
    <property type="entry name" value="Alanine--tRNA ligase"/>
    <property type="match status" value="1"/>
</dbReference>
<dbReference type="FunFam" id="3.10.310.40:FF:000001">
    <property type="entry name" value="Alanine--tRNA ligase"/>
    <property type="match status" value="1"/>
</dbReference>
<dbReference type="FunFam" id="3.30.54.20:FF:000001">
    <property type="entry name" value="Alanine--tRNA ligase"/>
    <property type="match status" value="1"/>
</dbReference>
<dbReference type="FunFam" id="3.30.930.10:FF:000046">
    <property type="entry name" value="Alanine--tRNA ligase"/>
    <property type="match status" value="1"/>
</dbReference>
<dbReference type="FunFam" id="3.30.980.10:FF:000004">
    <property type="entry name" value="Alanine--tRNA ligase, cytoplasmic"/>
    <property type="match status" value="1"/>
</dbReference>
<dbReference type="Gene3D" id="2.40.30.130">
    <property type="match status" value="1"/>
</dbReference>
<dbReference type="Gene3D" id="3.10.310.40">
    <property type="match status" value="1"/>
</dbReference>
<dbReference type="Gene3D" id="3.30.54.20">
    <property type="match status" value="1"/>
</dbReference>
<dbReference type="Gene3D" id="6.10.250.550">
    <property type="match status" value="1"/>
</dbReference>
<dbReference type="Gene3D" id="3.30.930.10">
    <property type="entry name" value="Bira Bifunctional Protein, Domain 2"/>
    <property type="match status" value="1"/>
</dbReference>
<dbReference type="Gene3D" id="3.30.980.10">
    <property type="entry name" value="Threonyl-trna Synthetase, Chain A, domain 2"/>
    <property type="match status" value="1"/>
</dbReference>
<dbReference type="HAMAP" id="MF_00036_B">
    <property type="entry name" value="Ala_tRNA_synth_B"/>
    <property type="match status" value="1"/>
</dbReference>
<dbReference type="InterPro" id="IPR045864">
    <property type="entry name" value="aa-tRNA-synth_II/BPL/LPL"/>
</dbReference>
<dbReference type="InterPro" id="IPR002318">
    <property type="entry name" value="Ala-tRNA-lgiase_IIc"/>
</dbReference>
<dbReference type="InterPro" id="IPR018162">
    <property type="entry name" value="Ala-tRNA-ligase_IIc_anticod-bd"/>
</dbReference>
<dbReference type="InterPro" id="IPR018165">
    <property type="entry name" value="Ala-tRNA-synth_IIc_core"/>
</dbReference>
<dbReference type="InterPro" id="IPR018164">
    <property type="entry name" value="Ala-tRNA-synth_IIc_N"/>
</dbReference>
<dbReference type="InterPro" id="IPR050058">
    <property type="entry name" value="Ala-tRNA_ligase"/>
</dbReference>
<dbReference type="InterPro" id="IPR023033">
    <property type="entry name" value="Ala_tRNA_ligase_euk/bac"/>
</dbReference>
<dbReference type="InterPro" id="IPR003156">
    <property type="entry name" value="DHHA1_dom"/>
</dbReference>
<dbReference type="InterPro" id="IPR018163">
    <property type="entry name" value="Thr/Ala-tRNA-synth_IIc_edit"/>
</dbReference>
<dbReference type="InterPro" id="IPR009000">
    <property type="entry name" value="Transl_B-barrel_sf"/>
</dbReference>
<dbReference type="InterPro" id="IPR012947">
    <property type="entry name" value="tRNA_SAD"/>
</dbReference>
<dbReference type="NCBIfam" id="TIGR00344">
    <property type="entry name" value="alaS"/>
    <property type="match status" value="1"/>
</dbReference>
<dbReference type="PANTHER" id="PTHR11777:SF9">
    <property type="entry name" value="ALANINE--TRNA LIGASE, CYTOPLASMIC"/>
    <property type="match status" value="1"/>
</dbReference>
<dbReference type="PANTHER" id="PTHR11777">
    <property type="entry name" value="ALANYL-TRNA SYNTHETASE"/>
    <property type="match status" value="1"/>
</dbReference>
<dbReference type="Pfam" id="PF02272">
    <property type="entry name" value="DHHA1"/>
    <property type="match status" value="1"/>
</dbReference>
<dbReference type="Pfam" id="PF01411">
    <property type="entry name" value="tRNA-synt_2c"/>
    <property type="match status" value="1"/>
</dbReference>
<dbReference type="Pfam" id="PF07973">
    <property type="entry name" value="tRNA_SAD"/>
    <property type="match status" value="1"/>
</dbReference>
<dbReference type="PRINTS" id="PR00980">
    <property type="entry name" value="TRNASYNTHALA"/>
</dbReference>
<dbReference type="SMART" id="SM00863">
    <property type="entry name" value="tRNA_SAD"/>
    <property type="match status" value="1"/>
</dbReference>
<dbReference type="SUPFAM" id="SSF55681">
    <property type="entry name" value="Class II aaRS and biotin synthetases"/>
    <property type="match status" value="1"/>
</dbReference>
<dbReference type="SUPFAM" id="SSF101353">
    <property type="entry name" value="Putative anticodon-binding domain of alanyl-tRNA synthetase (AlaRS)"/>
    <property type="match status" value="1"/>
</dbReference>
<dbReference type="SUPFAM" id="SSF55186">
    <property type="entry name" value="ThrRS/AlaRS common domain"/>
    <property type="match status" value="1"/>
</dbReference>
<dbReference type="SUPFAM" id="SSF50447">
    <property type="entry name" value="Translation proteins"/>
    <property type="match status" value="1"/>
</dbReference>
<dbReference type="PROSITE" id="PS50860">
    <property type="entry name" value="AA_TRNA_LIGASE_II_ALA"/>
    <property type="match status" value="1"/>
</dbReference>
<name>SYA_LISW6</name>
<evidence type="ECO:0000255" key="1">
    <source>
        <dbReference type="HAMAP-Rule" id="MF_00036"/>
    </source>
</evidence>
<comment type="function">
    <text evidence="1">Catalyzes the attachment of alanine to tRNA(Ala) in a two-step reaction: alanine is first activated by ATP to form Ala-AMP and then transferred to the acceptor end of tRNA(Ala). Also edits incorrectly charged Ser-tRNA(Ala) and Gly-tRNA(Ala) via its editing domain.</text>
</comment>
<comment type="catalytic activity">
    <reaction evidence="1">
        <text>tRNA(Ala) + L-alanine + ATP = L-alanyl-tRNA(Ala) + AMP + diphosphate</text>
        <dbReference type="Rhea" id="RHEA:12540"/>
        <dbReference type="Rhea" id="RHEA-COMP:9657"/>
        <dbReference type="Rhea" id="RHEA-COMP:9923"/>
        <dbReference type="ChEBI" id="CHEBI:30616"/>
        <dbReference type="ChEBI" id="CHEBI:33019"/>
        <dbReference type="ChEBI" id="CHEBI:57972"/>
        <dbReference type="ChEBI" id="CHEBI:78442"/>
        <dbReference type="ChEBI" id="CHEBI:78497"/>
        <dbReference type="ChEBI" id="CHEBI:456215"/>
        <dbReference type="EC" id="6.1.1.7"/>
    </reaction>
</comment>
<comment type="cofactor">
    <cofactor evidence="1">
        <name>Zn(2+)</name>
        <dbReference type="ChEBI" id="CHEBI:29105"/>
    </cofactor>
    <text evidence="1">Binds 1 zinc ion per subunit.</text>
</comment>
<comment type="subcellular location">
    <subcellularLocation>
        <location evidence="1">Cytoplasm</location>
    </subcellularLocation>
</comment>
<comment type="domain">
    <text evidence="1">Consists of three domains; the N-terminal catalytic domain, the editing domain and the C-terminal C-Ala domain. The editing domain removes incorrectly charged amino acids, while the C-Ala domain, along with tRNA(Ala), serves as a bridge to cooperatively bring together the editing and aminoacylation centers thus stimulating deacylation of misacylated tRNAs.</text>
</comment>
<comment type="similarity">
    <text evidence="1">Belongs to the class-II aminoacyl-tRNA synthetase family.</text>
</comment>
<protein>
    <recommendedName>
        <fullName evidence="1">Alanine--tRNA ligase</fullName>
        <ecNumber evidence="1">6.1.1.7</ecNumber>
    </recommendedName>
    <alternativeName>
        <fullName evidence="1">Alanyl-tRNA synthetase</fullName>
        <shortName evidence="1">AlaRS</shortName>
    </alternativeName>
</protein>
<accession>A0AIV3</accession>
<sequence length="879" mass="98019">MKQLSSAEVRQLFLDFFKEKGHTIEPSAPLVPNNDPTILWINSGVATMKKYFDGSVIPDNPRMANAQKSIRTNDIENVGKTARHHTFFEMLGNFSIGDYFKEGAIVFAWEFLTSPKWIGFDPDKLYVTVYPEDEEAKTIWREKIGLSEEHIVEIEDNFWDIGIGPSGPDSEIFYDRGPTFGDDTSDPELYPGGENERYLEIWNLVFSQFNHNPDGTYTPLPKQNIDTGMGLERMVSIIQDAPTNFETDLFMPIIREVEQIAGVKYGHNQENDVAFKVIADHIRTVAFAIGDGALPSNEGRGYILRRLLRRAVRYAKVLTINEPFMYKLVPVVGKIMNSFYPEVENQTDFIQKVIRTEEERFHETLNEGLAILETILKTAKETNEQVIKGADIFKLYDTFGFPVELTEEYAEDHGLKVDHAGFEAEMKEQRDRARSARADVKSMQVQGELLANLTAKSEFVGYNATEHVSEILYIIQDDALVDEVASGKTAQVIFKETPFYAESGGQVADKGTIESETGLAYVEDVQKAPNKQNLHRISVKEGVLKTGDTVKLAVDKVKRRETIKNHTATHLLHRALKDTLGEHVNQAGSLVSPDRLRFDFSHFGQITEEELTKMEEIVNEKIWEQINVVIEEMPIAEAKELGAMALFGEKYGDVVRVVQVGKYSIELCGGVHVRNTADIGLFKIVSETGIGAGTRRIEAVTGKEAYRFVTEQENTLKHTANLLKATTKEAPQKVEQLQADLREVKRENESLLSKLASAASADIFESPEEIGGVKVIAKQVNAKDMNQLRQFVDNWKDKKIGGILVLGAVQGEKVNLISAVSEDAIKAGYHAGKLLKEVATKCGGNGGGRPDMAQAGGKNPAELATALDYVSTCVKEQQA</sequence>
<keyword id="KW-0030">Aminoacyl-tRNA synthetase</keyword>
<keyword id="KW-0067">ATP-binding</keyword>
<keyword id="KW-0963">Cytoplasm</keyword>
<keyword id="KW-0436">Ligase</keyword>
<keyword id="KW-0479">Metal-binding</keyword>
<keyword id="KW-0547">Nucleotide-binding</keyword>
<keyword id="KW-0648">Protein biosynthesis</keyword>
<keyword id="KW-0694">RNA-binding</keyword>
<keyword id="KW-0820">tRNA-binding</keyword>
<keyword id="KW-0862">Zinc</keyword>